<evidence type="ECO:0000255" key="1">
    <source>
        <dbReference type="HAMAP-Rule" id="MF_00372"/>
    </source>
</evidence>
<evidence type="ECO:0000305" key="2"/>
<protein>
    <recommendedName>
        <fullName evidence="1">Imidazolonepropionase</fullName>
        <ecNumber evidence="1">3.5.2.7</ecNumber>
    </recommendedName>
    <alternativeName>
        <fullName evidence="1">Imidazolone-5-propionate hydrolase</fullName>
    </alternativeName>
</protein>
<comment type="function">
    <text evidence="1">Catalyzes the hydrolytic cleavage of the carbon-nitrogen bond in imidazolone-5-propanoate to yield N-formimidoyl-L-glutamate. It is the third step in the universal histidine degradation pathway.</text>
</comment>
<comment type="catalytic activity">
    <reaction evidence="1">
        <text>4-imidazolone-5-propanoate + H2O = N-formimidoyl-L-glutamate</text>
        <dbReference type="Rhea" id="RHEA:23660"/>
        <dbReference type="ChEBI" id="CHEBI:15377"/>
        <dbReference type="ChEBI" id="CHEBI:58928"/>
        <dbReference type="ChEBI" id="CHEBI:77893"/>
        <dbReference type="EC" id="3.5.2.7"/>
    </reaction>
</comment>
<comment type="cofactor">
    <cofactor evidence="1">
        <name>Zn(2+)</name>
        <dbReference type="ChEBI" id="CHEBI:29105"/>
    </cofactor>
    <cofactor evidence="1">
        <name>Fe(3+)</name>
        <dbReference type="ChEBI" id="CHEBI:29034"/>
    </cofactor>
    <text evidence="1">Binds 1 zinc or iron ion per subunit.</text>
</comment>
<comment type="pathway">
    <text evidence="1">Amino-acid degradation; L-histidine degradation into L-glutamate; N-formimidoyl-L-glutamate from L-histidine: step 3/3.</text>
</comment>
<comment type="subcellular location">
    <subcellularLocation>
        <location evidence="1">Cytoplasm</location>
    </subcellularLocation>
</comment>
<comment type="similarity">
    <text evidence="1">Belongs to the metallo-dependent hydrolases superfamily. HutI family.</text>
</comment>
<comment type="sequence caution" evidence="2">
    <conflict type="erroneous initiation">
        <sequence resource="EMBL-CDS" id="ABF38812"/>
    </conflict>
</comment>
<accession>Q1J4C4</accession>
<organism>
    <name type="scientific">Streptococcus pyogenes serotype M4 (strain MGAS10750)</name>
    <dbReference type="NCBI Taxonomy" id="370554"/>
    <lineage>
        <taxon>Bacteria</taxon>
        <taxon>Bacillati</taxon>
        <taxon>Bacillota</taxon>
        <taxon>Bacilli</taxon>
        <taxon>Lactobacillales</taxon>
        <taxon>Streptococcaceae</taxon>
        <taxon>Streptococcus</taxon>
    </lineage>
</organism>
<proteinExistence type="inferred from homology"/>
<keyword id="KW-0963">Cytoplasm</keyword>
<keyword id="KW-0369">Histidine metabolism</keyword>
<keyword id="KW-0378">Hydrolase</keyword>
<keyword id="KW-0408">Iron</keyword>
<keyword id="KW-0479">Metal-binding</keyword>
<keyword id="KW-0862">Zinc</keyword>
<sequence length="421" mass="46007">MVADVLLTHFNQLFCLNDPGHPLTGQEMKKATIVEDGYIAIKDSLIVALGSGEPDAELVGPQTIMRSYKGKIATPGIIDCHTHLVYGGSREHEFAKKLAGVSYLDILAQGGGILSTVRATRSASFDNLYQKSKRLLDYMLLHGVTTVEAKSGYGLDWETEKRQLDVVAALEKDHPIDLVSTFMAAHAIPEEYKGNPKAYLDVIIKDMLPVVKEENLAEFCDIFCEKNVFTADESRYLLSKAKEMGFKLRIHADEIASIGGVDVAAELSAVSAEHLMMITDDGIAKLIGAGVIGNLLPATTFSLMEDTYAPARKMIDAGMAITLSTDSNPGSCPTANMQFVMQLGCFMLRLTPIEVLNAVTINAAYSVNRQERVGSLTVGKEADIAIFDAPNIDYPFYFFATNLIHQVYKKGQLTVDRGRIL</sequence>
<name>HUTI_STRPF</name>
<dbReference type="EC" id="3.5.2.7" evidence="1"/>
<dbReference type="EMBL" id="CP000262">
    <property type="protein sequence ID" value="ABF38812.1"/>
    <property type="status" value="ALT_INIT"/>
    <property type="molecule type" value="Genomic_DNA"/>
</dbReference>
<dbReference type="SMR" id="Q1J4C4"/>
<dbReference type="KEGG" id="spi:MGAS10750_Spy1862"/>
<dbReference type="HOGENOM" id="CLU_041647_0_1_9"/>
<dbReference type="UniPathway" id="UPA00379">
    <property type="reaction ID" value="UER00551"/>
</dbReference>
<dbReference type="Proteomes" id="UP000002434">
    <property type="component" value="Chromosome"/>
</dbReference>
<dbReference type="GO" id="GO:0005737">
    <property type="term" value="C:cytoplasm"/>
    <property type="evidence" value="ECO:0007669"/>
    <property type="project" value="UniProtKB-SubCell"/>
</dbReference>
<dbReference type="GO" id="GO:0050480">
    <property type="term" value="F:imidazolonepropionase activity"/>
    <property type="evidence" value="ECO:0007669"/>
    <property type="project" value="UniProtKB-UniRule"/>
</dbReference>
<dbReference type="GO" id="GO:0005506">
    <property type="term" value="F:iron ion binding"/>
    <property type="evidence" value="ECO:0007669"/>
    <property type="project" value="UniProtKB-UniRule"/>
</dbReference>
<dbReference type="GO" id="GO:0008270">
    <property type="term" value="F:zinc ion binding"/>
    <property type="evidence" value="ECO:0007669"/>
    <property type="project" value="UniProtKB-UniRule"/>
</dbReference>
<dbReference type="GO" id="GO:0019556">
    <property type="term" value="P:L-histidine catabolic process to glutamate and formamide"/>
    <property type="evidence" value="ECO:0007669"/>
    <property type="project" value="UniProtKB-UniPathway"/>
</dbReference>
<dbReference type="GO" id="GO:0019557">
    <property type="term" value="P:L-histidine catabolic process to glutamate and formate"/>
    <property type="evidence" value="ECO:0007669"/>
    <property type="project" value="UniProtKB-UniPathway"/>
</dbReference>
<dbReference type="CDD" id="cd01296">
    <property type="entry name" value="Imidazolone-5PH"/>
    <property type="match status" value="1"/>
</dbReference>
<dbReference type="FunFam" id="3.20.20.140:FF:000007">
    <property type="entry name" value="Imidazolonepropionase"/>
    <property type="match status" value="1"/>
</dbReference>
<dbReference type="Gene3D" id="3.20.20.140">
    <property type="entry name" value="Metal-dependent hydrolases"/>
    <property type="match status" value="1"/>
</dbReference>
<dbReference type="Gene3D" id="2.30.40.10">
    <property type="entry name" value="Urease, subunit C, domain 1"/>
    <property type="match status" value="1"/>
</dbReference>
<dbReference type="HAMAP" id="MF_00372">
    <property type="entry name" value="HutI"/>
    <property type="match status" value="1"/>
</dbReference>
<dbReference type="InterPro" id="IPR006680">
    <property type="entry name" value="Amidohydro-rel"/>
</dbReference>
<dbReference type="InterPro" id="IPR005920">
    <property type="entry name" value="HutI"/>
</dbReference>
<dbReference type="InterPro" id="IPR011059">
    <property type="entry name" value="Metal-dep_hydrolase_composite"/>
</dbReference>
<dbReference type="InterPro" id="IPR032466">
    <property type="entry name" value="Metal_Hydrolase"/>
</dbReference>
<dbReference type="NCBIfam" id="TIGR01224">
    <property type="entry name" value="hutI"/>
    <property type="match status" value="1"/>
</dbReference>
<dbReference type="PANTHER" id="PTHR42752">
    <property type="entry name" value="IMIDAZOLONEPROPIONASE"/>
    <property type="match status" value="1"/>
</dbReference>
<dbReference type="PANTHER" id="PTHR42752:SF1">
    <property type="entry name" value="IMIDAZOLONEPROPIONASE-RELATED"/>
    <property type="match status" value="1"/>
</dbReference>
<dbReference type="Pfam" id="PF01979">
    <property type="entry name" value="Amidohydro_1"/>
    <property type="match status" value="1"/>
</dbReference>
<dbReference type="SUPFAM" id="SSF51338">
    <property type="entry name" value="Composite domain of metallo-dependent hydrolases"/>
    <property type="match status" value="1"/>
</dbReference>
<dbReference type="SUPFAM" id="SSF51556">
    <property type="entry name" value="Metallo-dependent hydrolases"/>
    <property type="match status" value="1"/>
</dbReference>
<gene>
    <name evidence="1" type="primary">hutI</name>
    <name type="ordered locus">MGAS10750_Spy1862</name>
</gene>
<reference key="1">
    <citation type="journal article" date="2006" name="Proc. Natl. Acad. Sci. U.S.A.">
        <title>Molecular genetic anatomy of inter- and intraserotype variation in the human bacterial pathogen group A Streptococcus.</title>
        <authorList>
            <person name="Beres S.B."/>
            <person name="Richter E.W."/>
            <person name="Nagiec M.J."/>
            <person name="Sumby P."/>
            <person name="Porcella S.F."/>
            <person name="DeLeo F.R."/>
            <person name="Musser J.M."/>
        </authorList>
    </citation>
    <scope>NUCLEOTIDE SEQUENCE [LARGE SCALE GENOMIC DNA]</scope>
    <source>
        <strain>MGAS10750</strain>
    </source>
</reference>
<feature type="chain" id="PRO_0000306526" description="Imidazolonepropionase">
    <location>
        <begin position="1"/>
        <end position="421"/>
    </location>
</feature>
<feature type="binding site" evidence="1">
    <location>
        <position position="81"/>
    </location>
    <ligand>
        <name>Fe(3+)</name>
        <dbReference type="ChEBI" id="CHEBI:29034"/>
    </ligand>
</feature>
<feature type="binding site" evidence="1">
    <location>
        <position position="81"/>
    </location>
    <ligand>
        <name>Zn(2+)</name>
        <dbReference type="ChEBI" id="CHEBI:29105"/>
    </ligand>
</feature>
<feature type="binding site" evidence="1">
    <location>
        <position position="83"/>
    </location>
    <ligand>
        <name>Fe(3+)</name>
        <dbReference type="ChEBI" id="CHEBI:29034"/>
    </ligand>
</feature>
<feature type="binding site" evidence="1">
    <location>
        <position position="83"/>
    </location>
    <ligand>
        <name>Zn(2+)</name>
        <dbReference type="ChEBI" id="CHEBI:29105"/>
    </ligand>
</feature>
<feature type="binding site" evidence="1">
    <location>
        <position position="90"/>
    </location>
    <ligand>
        <name>4-imidazolone-5-propanoate</name>
        <dbReference type="ChEBI" id="CHEBI:77893"/>
    </ligand>
</feature>
<feature type="binding site" evidence="1">
    <location>
        <position position="153"/>
    </location>
    <ligand>
        <name>4-imidazolone-5-propanoate</name>
        <dbReference type="ChEBI" id="CHEBI:77893"/>
    </ligand>
</feature>
<feature type="binding site" evidence="1">
    <location>
        <position position="153"/>
    </location>
    <ligand>
        <name>N-formimidoyl-L-glutamate</name>
        <dbReference type="ChEBI" id="CHEBI:58928"/>
    </ligand>
</feature>
<feature type="binding site" evidence="1">
    <location>
        <position position="186"/>
    </location>
    <ligand>
        <name>4-imidazolone-5-propanoate</name>
        <dbReference type="ChEBI" id="CHEBI:77893"/>
    </ligand>
</feature>
<feature type="binding site" evidence="1">
    <location>
        <position position="251"/>
    </location>
    <ligand>
        <name>Fe(3+)</name>
        <dbReference type="ChEBI" id="CHEBI:29034"/>
    </ligand>
</feature>
<feature type="binding site" evidence="1">
    <location>
        <position position="251"/>
    </location>
    <ligand>
        <name>Zn(2+)</name>
        <dbReference type="ChEBI" id="CHEBI:29105"/>
    </ligand>
</feature>
<feature type="binding site" evidence="1">
    <location>
        <position position="254"/>
    </location>
    <ligand>
        <name>4-imidazolone-5-propanoate</name>
        <dbReference type="ChEBI" id="CHEBI:77893"/>
    </ligand>
</feature>
<feature type="binding site" evidence="1">
    <location>
        <position position="326"/>
    </location>
    <ligand>
        <name>Fe(3+)</name>
        <dbReference type="ChEBI" id="CHEBI:29034"/>
    </ligand>
</feature>
<feature type="binding site" evidence="1">
    <location>
        <position position="326"/>
    </location>
    <ligand>
        <name>Zn(2+)</name>
        <dbReference type="ChEBI" id="CHEBI:29105"/>
    </ligand>
</feature>
<feature type="binding site" evidence="1">
    <location>
        <position position="328"/>
    </location>
    <ligand>
        <name>N-formimidoyl-L-glutamate</name>
        <dbReference type="ChEBI" id="CHEBI:58928"/>
    </ligand>
</feature>
<feature type="binding site" evidence="1">
    <location>
        <position position="330"/>
    </location>
    <ligand>
        <name>N-formimidoyl-L-glutamate</name>
        <dbReference type="ChEBI" id="CHEBI:58928"/>
    </ligand>
</feature>
<feature type="binding site" evidence="1">
    <location>
        <position position="331"/>
    </location>
    <ligand>
        <name>4-imidazolone-5-propanoate</name>
        <dbReference type="ChEBI" id="CHEBI:77893"/>
    </ligand>
</feature>